<reference key="1">
    <citation type="journal article" date="2003" name="Appl. Environ. Microbiol.">
        <title>Unusual organization for lactose and galactose gene clusters in Lactobacillus helveticus.</title>
        <authorList>
            <person name="Fortina M.G."/>
            <person name="Ricci G."/>
            <person name="Mora D."/>
            <person name="Guglielmetti S."/>
            <person name="Manachini P.L."/>
        </authorList>
    </citation>
    <scope>NUCLEOTIDE SEQUENCE [GENOMIC DNA]</scope>
    <scope>TRANSCRIPTIONAL REGULATION</scope>
    <source>
        <strain>ATCC 15009 / DSM 20075 / BCRC 12936 / JCM 1120 / NBRC 15019 / NCIMB 11971 / NRRL B-4526 / Lh12</strain>
    </source>
</reference>
<proteinExistence type="evidence at transcript level"/>
<name>LACY_LACHE</name>
<protein>
    <recommendedName>
        <fullName>Lactose permease</fullName>
    </recommendedName>
    <alternativeName>
        <fullName>Lactose transport protein</fullName>
    </alternativeName>
    <alternativeName>
        <fullName>Lactose transporter</fullName>
    </alternativeName>
    <alternativeName>
        <fullName>Lactose-proton symporter</fullName>
    </alternativeName>
    <domain>
        <recommendedName>
            <fullName>Putative phosphotransferase enzyme IIA component</fullName>
            <ecNumber>2.7.1.-</ecNumber>
        </recommendedName>
        <alternativeName>
            <fullName>Putative PTS system EIIA component</fullName>
        </alternativeName>
    </domain>
</protein>
<feature type="chain" id="PRO_0000170758" description="Lactose permease">
    <location>
        <begin position="1"/>
        <end position="638"/>
    </location>
</feature>
<feature type="transmembrane region" description="Helical" evidence="2">
    <location>
        <begin position="27"/>
        <end position="47"/>
    </location>
</feature>
<feature type="transmembrane region" description="Helical" evidence="2">
    <location>
        <begin position="56"/>
        <end position="76"/>
    </location>
</feature>
<feature type="transmembrane region" description="Helical" evidence="2">
    <location>
        <begin position="94"/>
        <end position="114"/>
    </location>
</feature>
<feature type="transmembrane region" description="Helical" evidence="2">
    <location>
        <begin position="121"/>
        <end position="141"/>
    </location>
</feature>
<feature type="transmembrane region" description="Helical" evidence="2">
    <location>
        <begin position="166"/>
        <end position="186"/>
    </location>
</feature>
<feature type="transmembrane region" description="Helical" evidence="2">
    <location>
        <begin position="204"/>
        <end position="224"/>
    </location>
</feature>
<feature type="transmembrane region" description="Helical" evidence="2">
    <location>
        <begin position="261"/>
        <end position="281"/>
    </location>
</feature>
<feature type="transmembrane region" description="Helical" evidence="2">
    <location>
        <begin position="291"/>
        <end position="311"/>
    </location>
</feature>
<feature type="transmembrane region" description="Helical" evidence="2">
    <location>
        <begin position="320"/>
        <end position="340"/>
    </location>
</feature>
<feature type="transmembrane region" description="Helical" evidence="2">
    <location>
        <begin position="343"/>
        <end position="363"/>
    </location>
</feature>
<feature type="transmembrane region" description="Helical" evidence="2">
    <location>
        <begin position="395"/>
        <end position="415"/>
    </location>
</feature>
<feature type="transmembrane region" description="Helical" evidence="2">
    <location>
        <begin position="429"/>
        <end position="449"/>
    </location>
</feature>
<feature type="domain" description="PTS EIIA type-1" evidence="3">
    <location>
        <begin position="503"/>
        <end position="610"/>
    </location>
</feature>
<feature type="region of interest" description="Permease">
    <location>
        <begin position="1"/>
        <end position="470"/>
    </location>
</feature>
<feature type="modified residue" description="Phosphohistidine; by HPr" evidence="1">
    <location>
        <position position="558"/>
    </location>
</feature>
<keyword id="KW-1003">Cell membrane</keyword>
<keyword id="KW-0418">Kinase</keyword>
<keyword id="KW-0472">Membrane</keyword>
<keyword id="KW-0597">Phosphoprotein</keyword>
<keyword id="KW-0762">Sugar transport</keyword>
<keyword id="KW-0769">Symport</keyword>
<keyword id="KW-0808">Transferase</keyword>
<keyword id="KW-0812">Transmembrane</keyword>
<keyword id="KW-1133">Transmembrane helix</keyword>
<keyword id="KW-0813">Transport</keyword>
<dbReference type="EC" id="2.7.1.-"/>
<dbReference type="EMBL" id="AJ512878">
    <property type="protein sequence ID" value="CAD55501.1"/>
    <property type="molecule type" value="Genomic_DNA"/>
</dbReference>
<dbReference type="RefSeq" id="WP_003627050.1">
    <property type="nucleotide sequence ID" value="NZ_SKBC01000105.1"/>
</dbReference>
<dbReference type="SMR" id="Q7WTB2"/>
<dbReference type="eggNOG" id="COG2190">
    <property type="taxonomic scope" value="Bacteria"/>
</dbReference>
<dbReference type="eggNOG" id="COG2211">
    <property type="taxonomic scope" value="Bacteria"/>
</dbReference>
<dbReference type="GO" id="GO:0005886">
    <property type="term" value="C:plasma membrane"/>
    <property type="evidence" value="ECO:0007669"/>
    <property type="project" value="UniProtKB-SubCell"/>
</dbReference>
<dbReference type="GO" id="GO:0016301">
    <property type="term" value="F:kinase activity"/>
    <property type="evidence" value="ECO:0007669"/>
    <property type="project" value="UniProtKB-KW"/>
</dbReference>
<dbReference type="GO" id="GO:0015293">
    <property type="term" value="F:symporter activity"/>
    <property type="evidence" value="ECO:0007669"/>
    <property type="project" value="UniProtKB-KW"/>
</dbReference>
<dbReference type="GO" id="GO:0009401">
    <property type="term" value="P:phosphoenolpyruvate-dependent sugar phosphotransferase system"/>
    <property type="evidence" value="ECO:0007669"/>
    <property type="project" value="InterPro"/>
</dbReference>
<dbReference type="GO" id="GO:0006814">
    <property type="term" value="P:sodium ion transport"/>
    <property type="evidence" value="ECO:0007669"/>
    <property type="project" value="InterPro"/>
</dbReference>
<dbReference type="CDD" id="cd17332">
    <property type="entry name" value="MFS_MelB_like"/>
    <property type="match status" value="1"/>
</dbReference>
<dbReference type="Gene3D" id="2.70.70.10">
    <property type="entry name" value="Glucose Permease (Domain IIA)"/>
    <property type="match status" value="1"/>
</dbReference>
<dbReference type="Gene3D" id="1.20.1250.20">
    <property type="entry name" value="MFS general substrate transporter like domains"/>
    <property type="match status" value="1"/>
</dbReference>
<dbReference type="InterPro" id="IPR011055">
    <property type="entry name" value="Dup_hybrid_motif"/>
</dbReference>
<dbReference type="InterPro" id="IPR039672">
    <property type="entry name" value="MFS_2"/>
</dbReference>
<dbReference type="InterPro" id="IPR036259">
    <property type="entry name" value="MFS_trans_sf"/>
</dbReference>
<dbReference type="InterPro" id="IPR001927">
    <property type="entry name" value="Na/Gal_symport"/>
</dbReference>
<dbReference type="InterPro" id="IPR018043">
    <property type="entry name" value="Na/Gal_symport_CS"/>
</dbReference>
<dbReference type="InterPro" id="IPR001127">
    <property type="entry name" value="PTS_EIIA_1_perm"/>
</dbReference>
<dbReference type="NCBIfam" id="TIGR00792">
    <property type="entry name" value="gph"/>
    <property type="match status" value="1"/>
</dbReference>
<dbReference type="NCBIfam" id="TIGR00830">
    <property type="entry name" value="PTBA"/>
    <property type="match status" value="1"/>
</dbReference>
<dbReference type="PANTHER" id="PTHR11328:SF24">
    <property type="entry name" value="MAJOR FACILITATOR SUPERFAMILY (MFS) PROFILE DOMAIN-CONTAINING PROTEIN"/>
    <property type="match status" value="1"/>
</dbReference>
<dbReference type="PANTHER" id="PTHR11328">
    <property type="entry name" value="MAJOR FACILITATOR SUPERFAMILY DOMAIN-CONTAINING PROTEIN"/>
    <property type="match status" value="1"/>
</dbReference>
<dbReference type="Pfam" id="PF13347">
    <property type="entry name" value="MFS_2"/>
    <property type="match status" value="1"/>
</dbReference>
<dbReference type="Pfam" id="PF00358">
    <property type="entry name" value="PTS_EIIA_1"/>
    <property type="match status" value="1"/>
</dbReference>
<dbReference type="SUPFAM" id="SSF51261">
    <property type="entry name" value="Duplicated hybrid motif"/>
    <property type="match status" value="1"/>
</dbReference>
<dbReference type="SUPFAM" id="SSF103473">
    <property type="entry name" value="MFS general substrate transporter"/>
    <property type="match status" value="1"/>
</dbReference>
<dbReference type="PROSITE" id="PS00872">
    <property type="entry name" value="NA_GALACTOSIDE_SYMP"/>
    <property type="match status" value="1"/>
</dbReference>
<dbReference type="PROSITE" id="PS51093">
    <property type="entry name" value="PTS_EIIA_TYPE_1"/>
    <property type="match status" value="1"/>
</dbReference>
<dbReference type="PROSITE" id="PS00371">
    <property type="entry name" value="PTS_EIIA_TYPE_1_HIS"/>
    <property type="match status" value="1"/>
</dbReference>
<accession>Q7WTB2</accession>
<evidence type="ECO:0000250" key="1"/>
<evidence type="ECO:0000255" key="2"/>
<evidence type="ECO:0000255" key="3">
    <source>
        <dbReference type="PROSITE-ProRule" id="PRU00416"/>
    </source>
</evidence>
<evidence type="ECO:0000269" key="4">
    <source>
    </source>
</evidence>
<evidence type="ECO:0000305" key="5"/>
<sequence>MHNHKVSGKQIVSYASFCLGNLGHSAFYGVMSTYFIIFITSGMFSGLNQSVADKLIGLITGLMVLVRIIELVIDPILGNVVDNTKTRWGKFKPWILIGTVVSAALLLILFTGIFGLAQQNWILFAILFVLIYIAFDVFYSLSDVSYWGMVPALSEDSHERGIYTSLGAFSGIIGWNSLPIIVVPLVTGVTYAVTGKHEEGAPGWFAFAAVISALAIICALIVCFGTKEKHNIIRDSAKQKTTLRQVFGAIFHNDQILWPSLAYLLYSLAAVITNGVLFYMYKFVIGKPNDFWVVGIIATIIGCCINPSFPVLNKYIPRKWLFIAGQTCMVLAYVLFIFGHNNVFLMDLGLVLFNINFALLVTVLTLTDAIEYGQLKIGQRNEAVVLAVRPMIDKFAGAVSNALVGYVAIAAGMTGSATAADMTSKGINTFNMMALYIPLALAVLSIVVFSLKVTLSEKKHAQVIEELKSKLAQGEIEKKTSVDTGTKEVTIYAPADGELMQMSSVVDEDGKPFPGKGFAIEPSSGQIYAPFDGTIKFTFGTKHAFEIVSQNGLQVVVHVGLGTVNLRGEGFETFYDDGQTVKKGDKLLEFDRDLALNNGYKDTIVIFYTQPGRIQNSGTIQAGKDIKHGEKVVDVQFK</sequence>
<organism>
    <name type="scientific">Lactobacillus helveticus</name>
    <name type="common">Lactobacillus suntoryeus</name>
    <dbReference type="NCBI Taxonomy" id="1587"/>
    <lineage>
        <taxon>Bacteria</taxon>
        <taxon>Bacillati</taxon>
        <taxon>Bacillota</taxon>
        <taxon>Bacilli</taxon>
        <taxon>Lactobacillales</taxon>
        <taxon>Lactobacillaceae</taxon>
        <taxon>Lactobacillus</taxon>
    </lineage>
</organism>
<gene>
    <name type="primary">lacS</name>
</gene>
<comment type="function">
    <text evidence="1">Responsible for transport of beta-galactosides into the cell, with the concomitant uptake of protons (symport system), and also for transport of homologous and heterologous exchange of beta-galactosides.</text>
</comment>
<comment type="subcellular location">
    <subcellularLocation>
        <location evidence="5">Cell membrane</location>
        <topology evidence="5">Multi-pass membrane protein</topology>
    </subcellularLocation>
</comment>
<comment type="induction">
    <text evidence="4">By lactose.</text>
</comment>
<comment type="domain">
    <text evidence="1">The PTS EIIA type-1 domain may serve a regulatory function, through its phosphorylation activity.</text>
</comment>
<comment type="similarity">
    <text evidence="5">In the N-terminal section; belongs to the sodium:galactoside symporter (TC 2.A.2) family.</text>
</comment>